<protein>
    <recommendedName>
        <fullName evidence="1">Beta-ketoacyl-[acyl-carrier-protein] synthase III</fullName>
        <shortName evidence="1">Beta-ketoacyl-ACP synthase III</shortName>
        <shortName evidence="1">KAS III</shortName>
        <ecNumber evidence="1">2.3.1.180</ecNumber>
    </recommendedName>
    <alternativeName>
        <fullName evidence="1">3-oxoacyl-[acyl-carrier-protein] synthase 3</fullName>
    </alternativeName>
    <alternativeName>
        <fullName evidence="1">3-oxoacyl-[acyl-carrier-protein] synthase III</fullName>
    </alternativeName>
</protein>
<evidence type="ECO:0000255" key="1">
    <source>
        <dbReference type="HAMAP-Rule" id="MF_01815"/>
    </source>
</evidence>
<gene>
    <name evidence="1" type="primary">fabH</name>
    <name type="ordered locus">CKO_01967</name>
</gene>
<reference key="1">
    <citation type="submission" date="2007-08" db="EMBL/GenBank/DDBJ databases">
        <authorList>
            <consortium name="The Citrobacter koseri Genome Sequencing Project"/>
            <person name="McClelland M."/>
            <person name="Sanderson E.K."/>
            <person name="Porwollik S."/>
            <person name="Spieth J."/>
            <person name="Clifton W.S."/>
            <person name="Latreille P."/>
            <person name="Courtney L."/>
            <person name="Wang C."/>
            <person name="Pepin K."/>
            <person name="Bhonagiri V."/>
            <person name="Nash W."/>
            <person name="Johnson M."/>
            <person name="Thiruvilangam P."/>
            <person name="Wilson R."/>
        </authorList>
    </citation>
    <scope>NUCLEOTIDE SEQUENCE [LARGE SCALE GENOMIC DNA]</scope>
    <source>
        <strain>ATCC BAA-895 / CDC 4225-83 / SGSC4696</strain>
    </source>
</reference>
<name>FABH_CITK8</name>
<dbReference type="EC" id="2.3.1.180" evidence="1"/>
<dbReference type="EMBL" id="CP000822">
    <property type="protein sequence ID" value="ABV13094.1"/>
    <property type="molecule type" value="Genomic_DNA"/>
</dbReference>
<dbReference type="RefSeq" id="WP_012132830.1">
    <property type="nucleotide sequence ID" value="NC_009792.1"/>
</dbReference>
<dbReference type="SMR" id="A8AHY1"/>
<dbReference type="STRING" id="290338.CKO_01967"/>
<dbReference type="GeneID" id="45135942"/>
<dbReference type="KEGG" id="cko:CKO_01967"/>
<dbReference type="HOGENOM" id="CLU_039592_3_1_6"/>
<dbReference type="OrthoDB" id="9815506at2"/>
<dbReference type="UniPathway" id="UPA00094"/>
<dbReference type="Proteomes" id="UP000008148">
    <property type="component" value="Chromosome"/>
</dbReference>
<dbReference type="GO" id="GO:0005737">
    <property type="term" value="C:cytoplasm"/>
    <property type="evidence" value="ECO:0007669"/>
    <property type="project" value="UniProtKB-SubCell"/>
</dbReference>
<dbReference type="GO" id="GO:0004315">
    <property type="term" value="F:3-oxoacyl-[acyl-carrier-protein] synthase activity"/>
    <property type="evidence" value="ECO:0007669"/>
    <property type="project" value="InterPro"/>
</dbReference>
<dbReference type="GO" id="GO:0033818">
    <property type="term" value="F:beta-ketoacyl-acyl-carrier-protein synthase III activity"/>
    <property type="evidence" value="ECO:0007669"/>
    <property type="project" value="UniProtKB-UniRule"/>
</dbReference>
<dbReference type="GO" id="GO:0006633">
    <property type="term" value="P:fatty acid biosynthetic process"/>
    <property type="evidence" value="ECO:0007669"/>
    <property type="project" value="UniProtKB-UniRule"/>
</dbReference>
<dbReference type="CDD" id="cd00830">
    <property type="entry name" value="KAS_III"/>
    <property type="match status" value="1"/>
</dbReference>
<dbReference type="FunFam" id="3.40.47.10:FF:000004">
    <property type="entry name" value="3-oxoacyl-[acyl-carrier-protein] synthase 3"/>
    <property type="match status" value="1"/>
</dbReference>
<dbReference type="Gene3D" id="3.40.47.10">
    <property type="match status" value="1"/>
</dbReference>
<dbReference type="HAMAP" id="MF_01815">
    <property type="entry name" value="FabH"/>
    <property type="match status" value="1"/>
</dbReference>
<dbReference type="InterPro" id="IPR013747">
    <property type="entry name" value="ACP_syn_III_C"/>
</dbReference>
<dbReference type="InterPro" id="IPR013751">
    <property type="entry name" value="ACP_syn_III_N"/>
</dbReference>
<dbReference type="InterPro" id="IPR004655">
    <property type="entry name" value="FabH"/>
</dbReference>
<dbReference type="InterPro" id="IPR016039">
    <property type="entry name" value="Thiolase-like"/>
</dbReference>
<dbReference type="NCBIfam" id="TIGR00747">
    <property type="entry name" value="fabH"/>
    <property type="match status" value="1"/>
</dbReference>
<dbReference type="NCBIfam" id="NF006829">
    <property type="entry name" value="PRK09352.1"/>
    <property type="match status" value="1"/>
</dbReference>
<dbReference type="PANTHER" id="PTHR43091">
    <property type="entry name" value="3-OXOACYL-[ACYL-CARRIER-PROTEIN] SYNTHASE"/>
    <property type="match status" value="1"/>
</dbReference>
<dbReference type="PANTHER" id="PTHR43091:SF1">
    <property type="entry name" value="BETA-KETOACYL-[ACYL-CARRIER-PROTEIN] SYNTHASE III, CHLOROPLASTIC"/>
    <property type="match status" value="1"/>
</dbReference>
<dbReference type="Pfam" id="PF08545">
    <property type="entry name" value="ACP_syn_III"/>
    <property type="match status" value="1"/>
</dbReference>
<dbReference type="Pfam" id="PF08541">
    <property type="entry name" value="ACP_syn_III_C"/>
    <property type="match status" value="1"/>
</dbReference>
<dbReference type="SUPFAM" id="SSF53901">
    <property type="entry name" value="Thiolase-like"/>
    <property type="match status" value="1"/>
</dbReference>
<accession>A8AHY1</accession>
<feature type="chain" id="PRO_1000056342" description="Beta-ketoacyl-[acyl-carrier-protein] synthase III">
    <location>
        <begin position="1"/>
        <end position="317"/>
    </location>
</feature>
<feature type="region of interest" description="ACP-binding" evidence="1">
    <location>
        <begin position="245"/>
        <end position="249"/>
    </location>
</feature>
<feature type="active site" evidence="1">
    <location>
        <position position="112"/>
    </location>
</feature>
<feature type="active site" evidence="1">
    <location>
        <position position="244"/>
    </location>
</feature>
<feature type="active site" evidence="1">
    <location>
        <position position="274"/>
    </location>
</feature>
<sequence length="317" mass="33483">MYTKIIGTGSYLPEQVRTNADLEKMVETSDEWIVTRTGIRERHIAAPNETVATMGYTAANRALEMAGIDKDQIGLIVVATTSATHAFPSAACQIQSMLGIKGCPAFDVAAACAGFTYALSVADQYVKSGAVKYALVIGSDVLARTCDPTDRGTIIIFGDGAGAAVLSASEEPGIISTHLHADGSYGELLTLPNADRVNPENPIYLTMAGNEVFKVAVTELAHIVDETLAANNLDRSALDWLVPHQANLRIISATAKKLGMSMDNVVVTLDRHGNTSAASVPCALDEAVRDGRIKAGQLVLLEAFGGGFTWGSALVRF</sequence>
<comment type="function">
    <text evidence="1">Catalyzes the condensation reaction of fatty acid synthesis by the addition to an acyl acceptor of two carbons from malonyl-ACP. Catalyzes the first condensation reaction which initiates fatty acid synthesis and may therefore play a role in governing the total rate of fatty acid production. Possesses both acetoacetyl-ACP synthase and acetyl transacylase activities. Its substrate specificity determines the biosynthesis of branched-chain and/or straight-chain of fatty acids.</text>
</comment>
<comment type="catalytic activity">
    <reaction evidence="1">
        <text>malonyl-[ACP] + acetyl-CoA + H(+) = 3-oxobutanoyl-[ACP] + CO2 + CoA</text>
        <dbReference type="Rhea" id="RHEA:12080"/>
        <dbReference type="Rhea" id="RHEA-COMP:9623"/>
        <dbReference type="Rhea" id="RHEA-COMP:9625"/>
        <dbReference type="ChEBI" id="CHEBI:15378"/>
        <dbReference type="ChEBI" id="CHEBI:16526"/>
        <dbReference type="ChEBI" id="CHEBI:57287"/>
        <dbReference type="ChEBI" id="CHEBI:57288"/>
        <dbReference type="ChEBI" id="CHEBI:78449"/>
        <dbReference type="ChEBI" id="CHEBI:78450"/>
        <dbReference type="EC" id="2.3.1.180"/>
    </reaction>
</comment>
<comment type="pathway">
    <text evidence="1">Lipid metabolism; fatty acid biosynthesis.</text>
</comment>
<comment type="subunit">
    <text evidence="1">Homodimer.</text>
</comment>
<comment type="subcellular location">
    <subcellularLocation>
        <location evidence="1">Cytoplasm</location>
    </subcellularLocation>
</comment>
<comment type="domain">
    <text evidence="1">The last Arg residue of the ACP-binding site is essential for the weak association between ACP/AcpP and FabH.</text>
</comment>
<comment type="similarity">
    <text evidence="1">Belongs to the thiolase-like superfamily. FabH family.</text>
</comment>
<proteinExistence type="inferred from homology"/>
<keyword id="KW-0012">Acyltransferase</keyword>
<keyword id="KW-0963">Cytoplasm</keyword>
<keyword id="KW-0275">Fatty acid biosynthesis</keyword>
<keyword id="KW-0276">Fatty acid metabolism</keyword>
<keyword id="KW-0444">Lipid biosynthesis</keyword>
<keyword id="KW-0443">Lipid metabolism</keyword>
<keyword id="KW-0511">Multifunctional enzyme</keyword>
<keyword id="KW-1185">Reference proteome</keyword>
<keyword id="KW-0808">Transferase</keyword>
<organism>
    <name type="scientific">Citrobacter koseri (strain ATCC BAA-895 / CDC 4225-83 / SGSC4696)</name>
    <dbReference type="NCBI Taxonomy" id="290338"/>
    <lineage>
        <taxon>Bacteria</taxon>
        <taxon>Pseudomonadati</taxon>
        <taxon>Pseudomonadota</taxon>
        <taxon>Gammaproteobacteria</taxon>
        <taxon>Enterobacterales</taxon>
        <taxon>Enterobacteriaceae</taxon>
        <taxon>Citrobacter</taxon>
    </lineage>
</organism>